<evidence type="ECO:0000255" key="1">
    <source>
        <dbReference type="HAMAP-Rule" id="MF_00323"/>
    </source>
</evidence>
<organism>
    <name type="scientific">Bacillus thuringiensis subsp. konkukian (strain 97-27)</name>
    <dbReference type="NCBI Taxonomy" id="281309"/>
    <lineage>
        <taxon>Bacteria</taxon>
        <taxon>Bacillati</taxon>
        <taxon>Bacillota</taxon>
        <taxon>Bacilli</taxon>
        <taxon>Bacillales</taxon>
        <taxon>Bacillaceae</taxon>
        <taxon>Bacillus</taxon>
        <taxon>Bacillus cereus group</taxon>
    </lineage>
</organism>
<protein>
    <recommendedName>
        <fullName evidence="1">Coproporphyrin III ferrochelatase 1</fullName>
        <ecNumber evidence="1">4.99.1.9</ecNumber>
    </recommendedName>
</protein>
<dbReference type="EC" id="4.99.1.9" evidence="1"/>
<dbReference type="EMBL" id="AE017355">
    <property type="protein sequence ID" value="AAT62347.1"/>
    <property type="molecule type" value="Genomic_DNA"/>
</dbReference>
<dbReference type="RefSeq" id="YP_035324.1">
    <property type="nucleotide sequence ID" value="NC_005957.1"/>
</dbReference>
<dbReference type="SMR" id="Q6HM97"/>
<dbReference type="KEGG" id="btk:BT9727_0985"/>
<dbReference type="PATRIC" id="fig|281309.8.peg.1039"/>
<dbReference type="HOGENOM" id="CLU_018884_2_1_9"/>
<dbReference type="UniPathway" id="UPA00252"/>
<dbReference type="Proteomes" id="UP000001301">
    <property type="component" value="Chromosome"/>
</dbReference>
<dbReference type="GO" id="GO:0005737">
    <property type="term" value="C:cytoplasm"/>
    <property type="evidence" value="ECO:0007669"/>
    <property type="project" value="UniProtKB-SubCell"/>
</dbReference>
<dbReference type="GO" id="GO:0004325">
    <property type="term" value="F:ferrochelatase activity"/>
    <property type="evidence" value="ECO:0007669"/>
    <property type="project" value="UniProtKB-UniRule"/>
</dbReference>
<dbReference type="GO" id="GO:0046872">
    <property type="term" value="F:metal ion binding"/>
    <property type="evidence" value="ECO:0007669"/>
    <property type="project" value="UniProtKB-KW"/>
</dbReference>
<dbReference type="GO" id="GO:0006783">
    <property type="term" value="P:heme biosynthetic process"/>
    <property type="evidence" value="ECO:0007669"/>
    <property type="project" value="UniProtKB-UniRule"/>
</dbReference>
<dbReference type="CDD" id="cd00419">
    <property type="entry name" value="Ferrochelatase_C"/>
    <property type="match status" value="1"/>
</dbReference>
<dbReference type="CDD" id="cd03411">
    <property type="entry name" value="Ferrochelatase_N"/>
    <property type="match status" value="1"/>
</dbReference>
<dbReference type="FunFam" id="3.40.50.1400:FF:000009">
    <property type="entry name" value="Ferrochelatase"/>
    <property type="match status" value="1"/>
</dbReference>
<dbReference type="Gene3D" id="3.40.50.1400">
    <property type="match status" value="2"/>
</dbReference>
<dbReference type="HAMAP" id="MF_00323">
    <property type="entry name" value="Ferrochelatase"/>
    <property type="match status" value="1"/>
</dbReference>
<dbReference type="InterPro" id="IPR001015">
    <property type="entry name" value="Ferrochelatase"/>
</dbReference>
<dbReference type="InterPro" id="IPR019772">
    <property type="entry name" value="Ferrochelatase_AS"/>
</dbReference>
<dbReference type="InterPro" id="IPR033644">
    <property type="entry name" value="Ferrochelatase_C"/>
</dbReference>
<dbReference type="InterPro" id="IPR033659">
    <property type="entry name" value="Ferrochelatase_N"/>
</dbReference>
<dbReference type="NCBIfam" id="TIGR00109">
    <property type="entry name" value="hemH"/>
    <property type="match status" value="1"/>
</dbReference>
<dbReference type="NCBIfam" id="NF009095">
    <property type="entry name" value="PRK12435.1"/>
    <property type="match status" value="1"/>
</dbReference>
<dbReference type="PANTHER" id="PTHR11108">
    <property type="entry name" value="FERROCHELATASE"/>
    <property type="match status" value="1"/>
</dbReference>
<dbReference type="PANTHER" id="PTHR11108:SF1">
    <property type="entry name" value="FERROCHELATASE, MITOCHONDRIAL"/>
    <property type="match status" value="1"/>
</dbReference>
<dbReference type="Pfam" id="PF00762">
    <property type="entry name" value="Ferrochelatase"/>
    <property type="match status" value="1"/>
</dbReference>
<dbReference type="SUPFAM" id="SSF53800">
    <property type="entry name" value="Chelatase"/>
    <property type="match status" value="1"/>
</dbReference>
<dbReference type="PROSITE" id="PS00534">
    <property type="entry name" value="FERROCHELATASE"/>
    <property type="match status" value="1"/>
</dbReference>
<feature type="chain" id="PRO_0000175111" description="Coproporphyrin III ferrochelatase 1">
    <location>
        <begin position="1"/>
        <end position="311"/>
    </location>
</feature>
<feature type="binding site" description="axial binding residue" evidence="1">
    <location>
        <position position="12"/>
    </location>
    <ligand>
        <name>Fe-coproporphyrin III</name>
        <dbReference type="ChEBI" id="CHEBI:68438"/>
    </ligand>
    <ligandPart>
        <name>Fe</name>
        <dbReference type="ChEBI" id="CHEBI:18248"/>
    </ligandPart>
</feature>
<feature type="binding site" evidence="1">
    <location>
        <position position="29"/>
    </location>
    <ligand>
        <name>Fe-coproporphyrin III</name>
        <dbReference type="ChEBI" id="CHEBI:68438"/>
    </ligand>
</feature>
<feature type="binding site" evidence="1">
    <location>
        <begin position="45"/>
        <end position="46"/>
    </location>
    <ligand>
        <name>Fe-coproporphyrin III</name>
        <dbReference type="ChEBI" id="CHEBI:68438"/>
    </ligand>
</feature>
<feature type="binding site" evidence="1">
    <location>
        <position position="53"/>
    </location>
    <ligand>
        <name>Fe-coproporphyrin III</name>
        <dbReference type="ChEBI" id="CHEBI:68438"/>
    </ligand>
</feature>
<feature type="binding site" evidence="1">
    <location>
        <position position="124"/>
    </location>
    <ligand>
        <name>Fe-coproporphyrin III</name>
        <dbReference type="ChEBI" id="CHEBI:68438"/>
    </ligand>
</feature>
<feature type="binding site" evidence="1">
    <location>
        <position position="182"/>
    </location>
    <ligand>
        <name>Fe(2+)</name>
        <dbReference type="ChEBI" id="CHEBI:29033"/>
    </ligand>
</feature>
<feature type="binding site" evidence="1">
    <location>
        <position position="263"/>
    </location>
    <ligand>
        <name>Fe(2+)</name>
        <dbReference type="ChEBI" id="CHEBI:29033"/>
    </ligand>
</feature>
<name>CPFC1_BACHK</name>
<sequence length="311" mass="35319">MKKKIGLLVMAYGTPYKEEDIERYYTHIRRGRKPSPEMLEDLTERYRAIGGISPLATITLEQAKKLEKRLNEVQDEVEYHMYLGLKHIEPFIEDAVKEMHNDGIQDAIALVLAPHYSTFSVKSYVGRAQEEAEKLGNLTIHGIDSWYKEPKFIQYWVDAVKGIYSGMSDAEREKAVLIVSAHSLPEKIIAMGDPYPDQLNETADYIARGAEVANYAVGWQSAGNTPDPWIGPDVQDLTRELNEKYGYTSFVYAPVGFVAEHLEVLYDNDFECKVVTDEIGAKYYRPEMPNASDAFIDCLTDVVVKKKESVM</sequence>
<accession>Q6HM97</accession>
<proteinExistence type="inferred from homology"/>
<comment type="function">
    <text evidence="1">Involved in coproporphyrin-dependent heme b biosynthesis. Catalyzes the insertion of ferrous iron into coproporphyrin III to form Fe-coproporphyrin III.</text>
</comment>
<comment type="catalytic activity">
    <reaction evidence="1">
        <text>Fe-coproporphyrin III + 2 H(+) = coproporphyrin III + Fe(2+)</text>
        <dbReference type="Rhea" id="RHEA:49572"/>
        <dbReference type="ChEBI" id="CHEBI:15378"/>
        <dbReference type="ChEBI" id="CHEBI:29033"/>
        <dbReference type="ChEBI" id="CHEBI:68438"/>
        <dbReference type="ChEBI" id="CHEBI:131725"/>
        <dbReference type="EC" id="4.99.1.9"/>
    </reaction>
    <physiologicalReaction direction="right-to-left" evidence="1">
        <dbReference type="Rhea" id="RHEA:49574"/>
    </physiologicalReaction>
</comment>
<comment type="pathway">
    <text evidence="1">Porphyrin-containing compound metabolism; protoheme biosynthesis.</text>
</comment>
<comment type="subcellular location">
    <subcellularLocation>
        <location evidence="1">Cytoplasm</location>
    </subcellularLocation>
</comment>
<comment type="similarity">
    <text evidence="1">Belongs to the ferrochelatase family.</text>
</comment>
<keyword id="KW-0963">Cytoplasm</keyword>
<keyword id="KW-0350">Heme biosynthesis</keyword>
<keyword id="KW-0408">Iron</keyword>
<keyword id="KW-0456">Lyase</keyword>
<keyword id="KW-0479">Metal-binding</keyword>
<keyword id="KW-0627">Porphyrin biosynthesis</keyword>
<reference key="1">
    <citation type="journal article" date="2006" name="J. Bacteriol.">
        <title>Pathogenomic sequence analysis of Bacillus cereus and Bacillus thuringiensis isolates closely related to Bacillus anthracis.</title>
        <authorList>
            <person name="Han C.S."/>
            <person name="Xie G."/>
            <person name="Challacombe J.F."/>
            <person name="Altherr M.R."/>
            <person name="Bhotika S.S."/>
            <person name="Bruce D."/>
            <person name="Campbell C.S."/>
            <person name="Campbell M.L."/>
            <person name="Chen J."/>
            <person name="Chertkov O."/>
            <person name="Cleland C."/>
            <person name="Dimitrijevic M."/>
            <person name="Doggett N.A."/>
            <person name="Fawcett J.J."/>
            <person name="Glavina T."/>
            <person name="Goodwin L.A."/>
            <person name="Hill K.K."/>
            <person name="Hitchcock P."/>
            <person name="Jackson P.J."/>
            <person name="Keim P."/>
            <person name="Kewalramani A.R."/>
            <person name="Longmire J."/>
            <person name="Lucas S."/>
            <person name="Malfatti S."/>
            <person name="McMurry K."/>
            <person name="Meincke L.J."/>
            <person name="Misra M."/>
            <person name="Moseman B.L."/>
            <person name="Mundt M."/>
            <person name="Munk A.C."/>
            <person name="Okinaka R.T."/>
            <person name="Parson-Quintana B."/>
            <person name="Reilly L.P."/>
            <person name="Richardson P."/>
            <person name="Robinson D.L."/>
            <person name="Rubin E."/>
            <person name="Saunders E."/>
            <person name="Tapia R."/>
            <person name="Tesmer J.G."/>
            <person name="Thayer N."/>
            <person name="Thompson L.S."/>
            <person name="Tice H."/>
            <person name="Ticknor L.O."/>
            <person name="Wills P.L."/>
            <person name="Brettin T.S."/>
            <person name="Gilna P."/>
        </authorList>
    </citation>
    <scope>NUCLEOTIDE SEQUENCE [LARGE SCALE GENOMIC DNA]</scope>
    <source>
        <strain>97-27</strain>
    </source>
</reference>
<gene>
    <name evidence="1" type="primary">cpfC1</name>
    <name type="ordered locus">BT9727_0985</name>
</gene>